<proteinExistence type="inferred from homology"/>
<name>Y9628_DICDI</name>
<keyword id="KW-0067">ATP-binding</keyword>
<keyword id="KW-0418">Kinase</keyword>
<keyword id="KW-0547">Nucleotide-binding</keyword>
<keyword id="KW-1185">Reference proteome</keyword>
<keyword id="KW-0723">Serine/threonine-protein kinase</keyword>
<keyword id="KW-0808">Transferase</keyword>
<feature type="chain" id="PRO_0000362068" description="Probable serine/threonine-protein kinase DDB_G0269628">
    <location>
        <begin position="1"/>
        <end position="737"/>
    </location>
</feature>
<feature type="domain" description="Protein kinase" evidence="1">
    <location>
        <begin position="8"/>
        <end position="488"/>
    </location>
</feature>
<feature type="region of interest" description="Disordered" evidence="3">
    <location>
        <begin position="155"/>
        <end position="251"/>
    </location>
</feature>
<feature type="region of interest" description="Disordered" evidence="3">
    <location>
        <begin position="278"/>
        <end position="298"/>
    </location>
</feature>
<feature type="compositionally biased region" description="Polar residues" evidence="3">
    <location>
        <begin position="156"/>
        <end position="167"/>
    </location>
</feature>
<feature type="compositionally biased region" description="Low complexity" evidence="3">
    <location>
        <begin position="168"/>
        <end position="229"/>
    </location>
</feature>
<feature type="active site" description="Proton acceptor" evidence="1 2">
    <location>
        <position position="349"/>
    </location>
</feature>
<feature type="binding site" evidence="1">
    <location>
        <begin position="14"/>
        <end position="22"/>
    </location>
    <ligand>
        <name>ATP</name>
        <dbReference type="ChEBI" id="CHEBI:30616"/>
    </ligand>
</feature>
<feature type="binding site" evidence="1">
    <location>
        <position position="36"/>
    </location>
    <ligand>
        <name>ATP</name>
        <dbReference type="ChEBI" id="CHEBI:30616"/>
    </ligand>
</feature>
<dbReference type="EC" id="2.7.11.1"/>
<dbReference type="EMBL" id="AAFI02000005">
    <property type="protein sequence ID" value="EAL72164.1"/>
    <property type="molecule type" value="Genomic_DNA"/>
</dbReference>
<dbReference type="RefSeq" id="XP_646129.1">
    <property type="nucleotide sequence ID" value="XM_641037.1"/>
</dbReference>
<dbReference type="FunCoup" id="Q55DK2">
    <property type="interactions" value="362"/>
</dbReference>
<dbReference type="STRING" id="44689.Q55DK2"/>
<dbReference type="PaxDb" id="44689-DDB0229344"/>
<dbReference type="EnsemblProtists" id="EAL72164">
    <property type="protein sequence ID" value="EAL72164"/>
    <property type="gene ID" value="DDB_G0269628"/>
</dbReference>
<dbReference type="GeneID" id="8617078"/>
<dbReference type="KEGG" id="ddi:DDB_G0269628"/>
<dbReference type="dictyBase" id="DDB_G0269628"/>
<dbReference type="VEuPathDB" id="AmoebaDB:DDB_G0269628"/>
<dbReference type="eggNOG" id="KOG0589">
    <property type="taxonomic scope" value="Eukaryota"/>
</dbReference>
<dbReference type="HOGENOM" id="CLU_376626_0_0_1"/>
<dbReference type="InParanoid" id="Q55DK2"/>
<dbReference type="OMA" id="HWFLAYC"/>
<dbReference type="PRO" id="PR:Q55DK2"/>
<dbReference type="Proteomes" id="UP000002195">
    <property type="component" value="Chromosome 1"/>
</dbReference>
<dbReference type="GO" id="GO:0005737">
    <property type="term" value="C:cytoplasm"/>
    <property type="evidence" value="ECO:0000318"/>
    <property type="project" value="GO_Central"/>
</dbReference>
<dbReference type="GO" id="GO:0005634">
    <property type="term" value="C:nucleus"/>
    <property type="evidence" value="ECO:0000318"/>
    <property type="project" value="GO_Central"/>
</dbReference>
<dbReference type="GO" id="GO:0016747">
    <property type="term" value="F:acyltransferase activity, transferring groups other than amino-acyl groups"/>
    <property type="evidence" value="ECO:0007669"/>
    <property type="project" value="InterPro"/>
</dbReference>
<dbReference type="GO" id="GO:0005524">
    <property type="term" value="F:ATP binding"/>
    <property type="evidence" value="ECO:0007669"/>
    <property type="project" value="UniProtKB-KW"/>
</dbReference>
<dbReference type="GO" id="GO:0004694">
    <property type="term" value="F:eukaryotic translation initiation factor 2alpha kinase activity"/>
    <property type="evidence" value="ECO:0000318"/>
    <property type="project" value="GO_Central"/>
</dbReference>
<dbReference type="GO" id="GO:0106310">
    <property type="term" value="F:protein serine kinase activity"/>
    <property type="evidence" value="ECO:0007669"/>
    <property type="project" value="RHEA"/>
</dbReference>
<dbReference type="GO" id="GO:0006446">
    <property type="term" value="P:regulation of translational initiation"/>
    <property type="evidence" value="ECO:0000318"/>
    <property type="project" value="GO_Central"/>
</dbReference>
<dbReference type="CDD" id="cd04301">
    <property type="entry name" value="NAT_SF"/>
    <property type="match status" value="1"/>
</dbReference>
<dbReference type="FunFam" id="1.10.510.10:FF:002133">
    <property type="match status" value="1"/>
</dbReference>
<dbReference type="FunFam" id="1.10.510.10:FF:001286">
    <property type="entry name" value="Possible serine/threonine kinase"/>
    <property type="match status" value="1"/>
</dbReference>
<dbReference type="FunFam" id="3.40.630.30:FF:000307">
    <property type="entry name" value="Probable serine/threonine-protein kinase DDB_G0279719"/>
    <property type="match status" value="1"/>
</dbReference>
<dbReference type="Gene3D" id="3.40.630.30">
    <property type="match status" value="1"/>
</dbReference>
<dbReference type="Gene3D" id="1.10.510.10">
    <property type="entry name" value="Transferase(Phosphotransferase) domain 1"/>
    <property type="match status" value="2"/>
</dbReference>
<dbReference type="InterPro" id="IPR016181">
    <property type="entry name" value="Acyl_CoA_acyltransferase"/>
</dbReference>
<dbReference type="InterPro" id="IPR000182">
    <property type="entry name" value="GNAT_dom"/>
</dbReference>
<dbReference type="InterPro" id="IPR011009">
    <property type="entry name" value="Kinase-like_dom_sf"/>
</dbReference>
<dbReference type="InterPro" id="IPR050660">
    <property type="entry name" value="NEK_Ser/Thr_kinase"/>
</dbReference>
<dbReference type="InterPro" id="IPR000719">
    <property type="entry name" value="Prot_kinase_dom"/>
</dbReference>
<dbReference type="InterPro" id="IPR008271">
    <property type="entry name" value="Ser/Thr_kinase_AS"/>
</dbReference>
<dbReference type="PANTHER" id="PTHR43671">
    <property type="entry name" value="SERINE/THREONINE-PROTEIN KINASE NEK"/>
    <property type="match status" value="1"/>
</dbReference>
<dbReference type="PANTHER" id="PTHR43671:SF13">
    <property type="entry name" value="SERINE_THREONINE-PROTEIN KINASE NEK2"/>
    <property type="match status" value="1"/>
</dbReference>
<dbReference type="Pfam" id="PF00583">
    <property type="entry name" value="Acetyltransf_1"/>
    <property type="match status" value="1"/>
</dbReference>
<dbReference type="Pfam" id="PF00069">
    <property type="entry name" value="Pkinase"/>
    <property type="match status" value="1"/>
</dbReference>
<dbReference type="SMART" id="SM00220">
    <property type="entry name" value="S_TKc"/>
    <property type="match status" value="1"/>
</dbReference>
<dbReference type="SUPFAM" id="SSF55729">
    <property type="entry name" value="Acyl-CoA N-acyltransferases (Nat)"/>
    <property type="match status" value="1"/>
</dbReference>
<dbReference type="SUPFAM" id="SSF56112">
    <property type="entry name" value="Protein kinase-like (PK-like)"/>
    <property type="match status" value="1"/>
</dbReference>
<dbReference type="PROSITE" id="PS50011">
    <property type="entry name" value="PROTEIN_KINASE_DOM"/>
    <property type="match status" value="1"/>
</dbReference>
<dbReference type="PROSITE" id="PS00108">
    <property type="entry name" value="PROTEIN_KINASE_ST"/>
    <property type="match status" value="1"/>
</dbReference>
<evidence type="ECO:0000255" key="1">
    <source>
        <dbReference type="PROSITE-ProRule" id="PRU00159"/>
    </source>
</evidence>
<evidence type="ECO:0000255" key="2">
    <source>
        <dbReference type="PROSITE-ProRule" id="PRU10027"/>
    </source>
</evidence>
<evidence type="ECO:0000256" key="3">
    <source>
        <dbReference type="SAM" id="MobiDB-lite"/>
    </source>
</evidence>
<evidence type="ECO:0000305" key="4"/>
<reference key="1">
    <citation type="journal article" date="2005" name="Nature">
        <title>The genome of the social amoeba Dictyostelium discoideum.</title>
        <authorList>
            <person name="Eichinger L."/>
            <person name="Pachebat J.A."/>
            <person name="Gloeckner G."/>
            <person name="Rajandream M.A."/>
            <person name="Sucgang R."/>
            <person name="Berriman M."/>
            <person name="Song J."/>
            <person name="Olsen R."/>
            <person name="Szafranski K."/>
            <person name="Xu Q."/>
            <person name="Tunggal B."/>
            <person name="Kummerfeld S."/>
            <person name="Madera M."/>
            <person name="Konfortov B.A."/>
            <person name="Rivero F."/>
            <person name="Bankier A.T."/>
            <person name="Lehmann R."/>
            <person name="Hamlin N."/>
            <person name="Davies R."/>
            <person name="Gaudet P."/>
            <person name="Fey P."/>
            <person name="Pilcher K."/>
            <person name="Chen G."/>
            <person name="Saunders D."/>
            <person name="Sodergren E.J."/>
            <person name="Davis P."/>
            <person name="Kerhornou A."/>
            <person name="Nie X."/>
            <person name="Hall N."/>
            <person name="Anjard C."/>
            <person name="Hemphill L."/>
            <person name="Bason N."/>
            <person name="Farbrother P."/>
            <person name="Desany B."/>
            <person name="Just E."/>
            <person name="Morio T."/>
            <person name="Rost R."/>
            <person name="Churcher C.M."/>
            <person name="Cooper J."/>
            <person name="Haydock S."/>
            <person name="van Driessche N."/>
            <person name="Cronin A."/>
            <person name="Goodhead I."/>
            <person name="Muzny D.M."/>
            <person name="Mourier T."/>
            <person name="Pain A."/>
            <person name="Lu M."/>
            <person name="Harper D."/>
            <person name="Lindsay R."/>
            <person name="Hauser H."/>
            <person name="James K.D."/>
            <person name="Quiles M."/>
            <person name="Madan Babu M."/>
            <person name="Saito T."/>
            <person name="Buchrieser C."/>
            <person name="Wardroper A."/>
            <person name="Felder M."/>
            <person name="Thangavelu M."/>
            <person name="Johnson D."/>
            <person name="Knights A."/>
            <person name="Loulseged H."/>
            <person name="Mungall K.L."/>
            <person name="Oliver K."/>
            <person name="Price C."/>
            <person name="Quail M.A."/>
            <person name="Urushihara H."/>
            <person name="Hernandez J."/>
            <person name="Rabbinowitsch E."/>
            <person name="Steffen D."/>
            <person name="Sanders M."/>
            <person name="Ma J."/>
            <person name="Kohara Y."/>
            <person name="Sharp S."/>
            <person name="Simmonds M.N."/>
            <person name="Spiegler S."/>
            <person name="Tivey A."/>
            <person name="Sugano S."/>
            <person name="White B."/>
            <person name="Walker D."/>
            <person name="Woodward J.R."/>
            <person name="Winckler T."/>
            <person name="Tanaka Y."/>
            <person name="Shaulsky G."/>
            <person name="Schleicher M."/>
            <person name="Weinstock G.M."/>
            <person name="Rosenthal A."/>
            <person name="Cox E.C."/>
            <person name="Chisholm R.L."/>
            <person name="Gibbs R.A."/>
            <person name="Loomis W.F."/>
            <person name="Platzer M."/>
            <person name="Kay R.R."/>
            <person name="Williams J.G."/>
            <person name="Dear P.H."/>
            <person name="Noegel A.A."/>
            <person name="Barrell B.G."/>
            <person name="Kuspa A."/>
        </authorList>
    </citation>
    <scope>NUCLEOTIDE SEQUENCE [LARGE SCALE GENOMIC DNA]</scope>
    <source>
        <strain>AX4</strain>
    </source>
</reference>
<accession>Q55DK2</accession>
<comment type="catalytic activity">
    <reaction>
        <text>L-seryl-[protein] + ATP = O-phospho-L-seryl-[protein] + ADP + H(+)</text>
        <dbReference type="Rhea" id="RHEA:17989"/>
        <dbReference type="Rhea" id="RHEA-COMP:9863"/>
        <dbReference type="Rhea" id="RHEA-COMP:11604"/>
        <dbReference type="ChEBI" id="CHEBI:15378"/>
        <dbReference type="ChEBI" id="CHEBI:29999"/>
        <dbReference type="ChEBI" id="CHEBI:30616"/>
        <dbReference type="ChEBI" id="CHEBI:83421"/>
        <dbReference type="ChEBI" id="CHEBI:456216"/>
        <dbReference type="EC" id="2.7.11.1"/>
    </reaction>
</comment>
<comment type="catalytic activity">
    <reaction>
        <text>L-threonyl-[protein] + ATP = O-phospho-L-threonyl-[protein] + ADP + H(+)</text>
        <dbReference type="Rhea" id="RHEA:46608"/>
        <dbReference type="Rhea" id="RHEA-COMP:11060"/>
        <dbReference type="Rhea" id="RHEA-COMP:11605"/>
        <dbReference type="ChEBI" id="CHEBI:15378"/>
        <dbReference type="ChEBI" id="CHEBI:30013"/>
        <dbReference type="ChEBI" id="CHEBI:30616"/>
        <dbReference type="ChEBI" id="CHEBI:61977"/>
        <dbReference type="ChEBI" id="CHEBI:456216"/>
        <dbReference type="EC" id="2.7.11.1"/>
    </reaction>
</comment>
<comment type="similarity">
    <text evidence="4">Belongs to the protein kinase superfamily. NEK Ser/Thr protein kinase family. NIMA subfamily.</text>
</comment>
<protein>
    <recommendedName>
        <fullName>Probable serine/threonine-protein kinase DDB_G0269628</fullName>
        <ecNumber>2.7.11.1</ecNumber>
    </recommendedName>
</protein>
<organism>
    <name type="scientific">Dictyostelium discoideum</name>
    <name type="common">Social amoeba</name>
    <dbReference type="NCBI Taxonomy" id="44689"/>
    <lineage>
        <taxon>Eukaryota</taxon>
        <taxon>Amoebozoa</taxon>
        <taxon>Evosea</taxon>
        <taxon>Eumycetozoa</taxon>
        <taxon>Dictyostelia</taxon>
        <taxon>Dictyosteliales</taxon>
        <taxon>Dictyosteliaceae</taxon>
        <taxon>Dictyostelium</taxon>
    </lineage>
</organism>
<gene>
    <name type="ORF">DDB_G0269628</name>
</gene>
<sequence length="737" mass="82091">MEDPLSSYKLIKDLRSGGEGKAILYEKDGVKYVGKKRLFDNLKDANQGLKEAMSLARIVHPNTVRFEDAIMTQIGDQIEITIMMEFCEMGDLLDFLIELSEPQHHHTVTLGSELSSLNLGSEYTGSDIDSTTSRTSSSSSTNFEAALLLENNNNNTIQHSHSSSSLVNGTTSPTNATTPPITTTTPNNRHSISTPTLAGTTTATTASPSSPSSPSSPSSPSSPSSPLSPQQHPVTSPQRKSSKSERKKKCSLKERKCIVKMTVDLTKKIFKKDNSNHTTAATTTTTTNTTHSSSSSSNLNIEEHVIHSNEIKKGVDSIYLIEQTQLIEWLLDLSYGVQALHRASMIHRDLKSENIFISGSNKLKIGDFGLAIQSAHHTGSIHSETVGTYCYSSPEILNSTYDKTTDIFSLGCIFYELITLKLLSHNRIYLGEDMLNDRFDSMQFLSTFPEKYEKLAPLVLSMISKNPTFRPSIESIIETLQKMDTSLLKERVVIKRENTIKGIRKQLDKSHFQEASLLLATSFVKDPRFFNIFPPSDPHSIPHLQHLYKYILKVLSSYNCSIWGYFAIDGTMVSCFVWLNPEKKKEIRLSDCIKGSLSLVTKIGLKRVGLILDLMRFDDNILSMAQNNNNNPNTSTSNLQTFKGSSSSSSSSCNHWFLAYCCTSEIFRGNGIGSHMIENVLNWADHNGVETRTVVFENNSIEFFQHHGFEVGSEFKSNLPKGVNKVMVLVRKPKQIY</sequence>